<name>TRM56_ARCFU</name>
<comment type="function">
    <text evidence="1">Specifically catalyzes the AdoMet-dependent 2'-O-ribose methylation of cytidine at position 56 in tRNAs.</text>
</comment>
<comment type="catalytic activity">
    <reaction>
        <text>cytidine(56) in tRNA + S-adenosyl-L-methionine = 2'-O-methylcytidine(56) in tRNA + S-adenosyl-L-homocysteine + H(+)</text>
        <dbReference type="Rhea" id="RHEA:42968"/>
        <dbReference type="Rhea" id="RHEA-COMP:10308"/>
        <dbReference type="Rhea" id="RHEA-COMP:10309"/>
        <dbReference type="ChEBI" id="CHEBI:15378"/>
        <dbReference type="ChEBI" id="CHEBI:57856"/>
        <dbReference type="ChEBI" id="CHEBI:59789"/>
        <dbReference type="ChEBI" id="CHEBI:74495"/>
        <dbReference type="ChEBI" id="CHEBI:82748"/>
        <dbReference type="EC" id="2.1.1.206"/>
    </reaction>
</comment>
<comment type="subunit">
    <text evidence="3">Homodimer.</text>
</comment>
<comment type="subcellular location">
    <subcellularLocation>
        <location evidence="2">Cytoplasm</location>
    </subcellularLocation>
</comment>
<comment type="similarity">
    <text evidence="2">Belongs to the aTrm56 family.</text>
</comment>
<sequence length="168" mass="19026">MEVYVLRLGHRPERDKRISTHVALTARAFGAKGIYFDTEDKSVFESVRDVVERWGGDFFIKAVSWKKLLREFDGLKVHLTMYGIPLPQKLEEIKRADKVLVVVGAEKVPPEVYELCDLNISIGTQPHSEVAALAVFLDRVLGKVFDISFDDAKIKVIPSERGKRVVSE</sequence>
<reference key="1">
    <citation type="journal article" date="1997" name="Nature">
        <title>The complete genome sequence of the hyperthermophilic, sulphate-reducing archaeon Archaeoglobus fulgidus.</title>
        <authorList>
            <person name="Klenk H.-P."/>
            <person name="Clayton R.A."/>
            <person name="Tomb J.-F."/>
            <person name="White O."/>
            <person name="Nelson K.E."/>
            <person name="Ketchum K.A."/>
            <person name="Dodson R.J."/>
            <person name="Gwinn M.L."/>
            <person name="Hickey E.K."/>
            <person name="Peterson J.D."/>
            <person name="Richardson D.L."/>
            <person name="Kerlavage A.R."/>
            <person name="Graham D.E."/>
            <person name="Kyrpides N.C."/>
            <person name="Fleischmann R.D."/>
            <person name="Quackenbush J."/>
            <person name="Lee N.H."/>
            <person name="Sutton G.G."/>
            <person name="Gill S.R."/>
            <person name="Kirkness E.F."/>
            <person name="Dougherty B.A."/>
            <person name="McKenney K."/>
            <person name="Adams M.D."/>
            <person name="Loftus B.J."/>
            <person name="Peterson S.N."/>
            <person name="Reich C.I."/>
            <person name="McNeil L.K."/>
            <person name="Badger J.H."/>
            <person name="Glodek A."/>
            <person name="Zhou L."/>
            <person name="Overbeek R."/>
            <person name="Gocayne J.D."/>
            <person name="Weidman J.F."/>
            <person name="McDonald L.A."/>
            <person name="Utterback T.R."/>
            <person name="Cotton M.D."/>
            <person name="Spriggs T."/>
            <person name="Artiach P."/>
            <person name="Kaine B.P."/>
            <person name="Sykes S.M."/>
            <person name="Sadow P.W."/>
            <person name="D'Andrea K.P."/>
            <person name="Bowman C."/>
            <person name="Fujii C."/>
            <person name="Garland S.A."/>
            <person name="Mason T.M."/>
            <person name="Olsen G.J."/>
            <person name="Fraser C.M."/>
            <person name="Smith H.O."/>
            <person name="Woese C.R."/>
            <person name="Venter J.C."/>
        </authorList>
    </citation>
    <scope>NUCLEOTIDE SEQUENCE [LARGE SCALE GENOMIC DNA]</scope>
    <source>
        <strain>ATCC 49558 / DSM 4304 / JCM 9628 / NBRC 100126 / VC-16</strain>
    </source>
</reference>
<reference key="2">
    <citation type="submission" date="2006-12" db="PDB data bank">
        <title>Crystal structure of a protein AF_0751 from Archaeoglobus fulgidus.</title>
        <authorList>
            <consortium name="New York structural genomix research consortium (NYSGXRC)"/>
        </authorList>
    </citation>
    <scope>X-RAY CRYSTALLOGRAPHY (2.2 ANGSTROMS)</scope>
    <scope>SUBUNIT</scope>
</reference>
<feature type="chain" id="PRO_0000146926" description="tRNA (cytidine(56)-2'-O)-methyltransferase">
    <location>
        <begin position="1"/>
        <end position="168"/>
    </location>
</feature>
<feature type="binding site" evidence="1">
    <location>
        <position position="79"/>
    </location>
    <ligand>
        <name>S-adenosyl-L-methionine</name>
        <dbReference type="ChEBI" id="CHEBI:59789"/>
    </ligand>
</feature>
<feature type="binding site" evidence="1">
    <location>
        <begin position="104"/>
        <end position="108"/>
    </location>
    <ligand>
        <name>S-adenosyl-L-methionine</name>
        <dbReference type="ChEBI" id="CHEBI:59789"/>
    </ligand>
</feature>
<feature type="strand" evidence="4">
    <location>
        <begin position="2"/>
        <end position="7"/>
    </location>
</feature>
<feature type="helix" evidence="4">
    <location>
        <begin position="16"/>
        <end position="28"/>
    </location>
</feature>
<feature type="strand" evidence="4">
    <location>
        <begin position="32"/>
        <end position="38"/>
    </location>
</feature>
<feature type="helix" evidence="4">
    <location>
        <begin position="41"/>
        <end position="54"/>
    </location>
</feature>
<feature type="strand" evidence="4">
    <location>
        <begin position="59"/>
        <end position="62"/>
    </location>
</feature>
<feature type="helix" evidence="4">
    <location>
        <begin position="65"/>
        <end position="71"/>
    </location>
</feature>
<feature type="strand" evidence="4">
    <location>
        <begin position="74"/>
        <end position="79"/>
    </location>
</feature>
<feature type="strand" evidence="4">
    <location>
        <begin position="83"/>
        <end position="85"/>
    </location>
</feature>
<feature type="helix" evidence="4">
    <location>
        <begin position="86"/>
        <end position="94"/>
    </location>
</feature>
<feature type="strand" evidence="4">
    <location>
        <begin position="97"/>
        <end position="103"/>
    </location>
</feature>
<feature type="helix" evidence="4">
    <location>
        <begin position="112"/>
        <end position="115"/>
    </location>
</feature>
<feature type="strand" evidence="4">
    <location>
        <begin position="116"/>
        <end position="125"/>
    </location>
</feature>
<feature type="helix" evidence="4">
    <location>
        <begin position="129"/>
        <end position="140"/>
    </location>
</feature>
<feature type="turn" evidence="4">
    <location>
        <begin position="144"/>
        <end position="146"/>
    </location>
</feature>
<feature type="strand" evidence="4">
    <location>
        <begin position="153"/>
        <end position="157"/>
    </location>
</feature>
<feature type="strand" evidence="4">
    <location>
        <begin position="160"/>
        <end position="162"/>
    </location>
</feature>
<feature type="strand" evidence="4">
    <location>
        <begin position="164"/>
        <end position="166"/>
    </location>
</feature>
<dbReference type="EC" id="2.1.1.206"/>
<dbReference type="EMBL" id="AE000782">
    <property type="protein sequence ID" value="AAB90489.1"/>
    <property type="molecule type" value="Genomic_DNA"/>
</dbReference>
<dbReference type="PIR" id="G69343">
    <property type="entry name" value="G69343"/>
</dbReference>
<dbReference type="RefSeq" id="WP_010878254.1">
    <property type="nucleotide sequence ID" value="NC_000917.1"/>
</dbReference>
<dbReference type="PDB" id="2O3A">
    <property type="method" value="X-ray"/>
    <property type="resolution" value="2.20 A"/>
    <property type="chains" value="A/B=2-168"/>
</dbReference>
<dbReference type="PDBsum" id="2O3A"/>
<dbReference type="SMR" id="O29507"/>
<dbReference type="STRING" id="224325.AF_0751"/>
<dbReference type="PaxDb" id="224325-AF_0751"/>
<dbReference type="EnsemblBacteria" id="AAB90489">
    <property type="protein sequence ID" value="AAB90489"/>
    <property type="gene ID" value="AF_0751"/>
</dbReference>
<dbReference type="KEGG" id="afu:AF_0751"/>
<dbReference type="eggNOG" id="arCOG01857">
    <property type="taxonomic scope" value="Archaea"/>
</dbReference>
<dbReference type="HOGENOM" id="CLU_123709_0_0_2"/>
<dbReference type="OrthoDB" id="14397at2157"/>
<dbReference type="PhylomeDB" id="O29507"/>
<dbReference type="EvolutionaryTrace" id="O29507"/>
<dbReference type="Proteomes" id="UP000002199">
    <property type="component" value="Chromosome"/>
</dbReference>
<dbReference type="GO" id="GO:0005737">
    <property type="term" value="C:cytoplasm"/>
    <property type="evidence" value="ECO:0007669"/>
    <property type="project" value="UniProtKB-SubCell"/>
</dbReference>
<dbReference type="GO" id="GO:0106059">
    <property type="term" value="F:tRNA (cytidine(56)-2'-O)-methyltransferase activity"/>
    <property type="evidence" value="ECO:0007669"/>
    <property type="project" value="UniProtKB-EC"/>
</dbReference>
<dbReference type="GO" id="GO:0002128">
    <property type="term" value="P:tRNA nucleoside ribose methylation"/>
    <property type="evidence" value="ECO:0007669"/>
    <property type="project" value="UniProtKB-UniRule"/>
</dbReference>
<dbReference type="CDD" id="cd18083">
    <property type="entry name" value="aTrm56-like"/>
    <property type="match status" value="1"/>
</dbReference>
<dbReference type="Gene3D" id="3.40.1280.10">
    <property type="match status" value="1"/>
</dbReference>
<dbReference type="HAMAP" id="MF_00077">
    <property type="entry name" value="tRNA_methyltr_aTrm56"/>
    <property type="match status" value="1"/>
</dbReference>
<dbReference type="InterPro" id="IPR029028">
    <property type="entry name" value="Alpha/beta_knot_MTases"/>
</dbReference>
<dbReference type="InterPro" id="IPR029026">
    <property type="entry name" value="tRNA_m1G_MTases_N"/>
</dbReference>
<dbReference type="InterPro" id="IPR002845">
    <property type="entry name" value="tRNA_mtfrase_aTrm56"/>
</dbReference>
<dbReference type="NCBIfam" id="NF003048">
    <property type="entry name" value="PRK03958.1"/>
    <property type="match status" value="1"/>
</dbReference>
<dbReference type="PANTHER" id="PTHR42197">
    <property type="entry name" value="TRNA (CYTIDINE(56)-2'-O)-METHYLTRANSFERASE"/>
    <property type="match status" value="1"/>
</dbReference>
<dbReference type="PANTHER" id="PTHR42197:SF1">
    <property type="entry name" value="TRNA (CYTIDINE(56)-2'-O)-METHYLTRANSFERASE"/>
    <property type="match status" value="1"/>
</dbReference>
<dbReference type="Pfam" id="PF01994">
    <property type="entry name" value="Trm56"/>
    <property type="match status" value="1"/>
</dbReference>
<dbReference type="PIRSF" id="PIRSF016123">
    <property type="entry name" value="UCP016123"/>
    <property type="match status" value="1"/>
</dbReference>
<dbReference type="SUPFAM" id="SSF75217">
    <property type="entry name" value="alpha/beta knot"/>
    <property type="match status" value="1"/>
</dbReference>
<keyword id="KW-0002">3D-structure</keyword>
<keyword id="KW-0963">Cytoplasm</keyword>
<keyword id="KW-0489">Methyltransferase</keyword>
<keyword id="KW-1185">Reference proteome</keyword>
<keyword id="KW-0949">S-adenosyl-L-methionine</keyword>
<keyword id="KW-0808">Transferase</keyword>
<keyword id="KW-0819">tRNA processing</keyword>
<evidence type="ECO:0000250" key="1"/>
<evidence type="ECO:0000305" key="2"/>
<evidence type="ECO:0000305" key="3">
    <source ref="2"/>
</evidence>
<evidence type="ECO:0007829" key="4">
    <source>
        <dbReference type="PDB" id="2O3A"/>
    </source>
</evidence>
<organism>
    <name type="scientific">Archaeoglobus fulgidus (strain ATCC 49558 / DSM 4304 / JCM 9628 / NBRC 100126 / VC-16)</name>
    <dbReference type="NCBI Taxonomy" id="224325"/>
    <lineage>
        <taxon>Archaea</taxon>
        <taxon>Methanobacteriati</taxon>
        <taxon>Methanobacteriota</taxon>
        <taxon>Archaeoglobi</taxon>
        <taxon>Archaeoglobales</taxon>
        <taxon>Archaeoglobaceae</taxon>
        <taxon>Archaeoglobus</taxon>
    </lineage>
</organism>
<accession>O29507</accession>
<gene>
    <name type="ordered locus">AF_0751</name>
</gene>
<protein>
    <recommendedName>
        <fullName>tRNA (cytidine(56)-2'-O)-methyltransferase</fullName>
        <ecNumber>2.1.1.206</ecNumber>
    </recommendedName>
    <alternativeName>
        <fullName>tRNA ribose 2'-O-methyltransferase aTrm56</fullName>
    </alternativeName>
</protein>
<proteinExistence type="evidence at protein level"/>